<protein>
    <recommendedName>
        <fullName>Nuclear receptor subfamily 2 group E member 1</fullName>
    </recommendedName>
    <alternativeName>
        <fullName>Nuclear receptor TLX</fullName>
    </alternativeName>
    <alternativeName>
        <fullName>Protein tailless homolog</fullName>
        <shortName>Tll</shortName>
        <shortName>xTLL</shortName>
    </alternativeName>
</protein>
<organism>
    <name type="scientific">Xenopus laevis</name>
    <name type="common">African clawed frog</name>
    <dbReference type="NCBI Taxonomy" id="8355"/>
    <lineage>
        <taxon>Eukaryota</taxon>
        <taxon>Metazoa</taxon>
        <taxon>Chordata</taxon>
        <taxon>Craniata</taxon>
        <taxon>Vertebrata</taxon>
        <taxon>Euteleostomi</taxon>
        <taxon>Amphibia</taxon>
        <taxon>Batrachia</taxon>
        <taxon>Anura</taxon>
        <taxon>Pipoidea</taxon>
        <taxon>Pipidae</taxon>
        <taxon>Xenopodinae</taxon>
        <taxon>Xenopus</taxon>
        <taxon>Xenopus</taxon>
    </lineage>
</organism>
<feature type="chain" id="PRO_0000053596" description="Nuclear receptor subfamily 2 group E member 1">
    <location>
        <begin position="1"/>
        <end position="386"/>
    </location>
</feature>
<feature type="domain" description="NR LBD" evidence="3">
    <location>
        <begin position="155"/>
        <end position="384"/>
    </location>
</feature>
<feature type="DNA-binding region" description="Nuclear receptor" evidence="2">
    <location>
        <begin position="13"/>
        <end position="90"/>
    </location>
</feature>
<feature type="zinc finger region" description="NR C4-type" evidence="2">
    <location>
        <begin position="16"/>
        <end position="36"/>
    </location>
</feature>
<feature type="zinc finger region" description="NR C4-type" evidence="2">
    <location>
        <begin position="52"/>
        <end position="78"/>
    </location>
</feature>
<dbReference type="EMBL" id="U67886">
    <property type="protein sequence ID" value="AAB07732.1"/>
    <property type="molecule type" value="mRNA"/>
</dbReference>
<dbReference type="RefSeq" id="NP_001079280.1">
    <property type="nucleotide sequence ID" value="NM_001085811.1"/>
</dbReference>
<dbReference type="SMR" id="P70052"/>
<dbReference type="GeneID" id="378567"/>
<dbReference type="KEGG" id="xla:378567"/>
<dbReference type="AGR" id="Xenbase:XB-GENE-864991"/>
<dbReference type="CTD" id="378567"/>
<dbReference type="Xenbase" id="XB-GENE-864991">
    <property type="gene designation" value="nr2e1.S"/>
</dbReference>
<dbReference type="OrthoDB" id="10045640at2759"/>
<dbReference type="Proteomes" id="UP000186698">
    <property type="component" value="Chromosome 5S"/>
</dbReference>
<dbReference type="Bgee" id="378567">
    <property type="expression patterns" value="Expressed in neurula embryo and 2 other cell types or tissues"/>
</dbReference>
<dbReference type="GO" id="GO:0005634">
    <property type="term" value="C:nucleus"/>
    <property type="evidence" value="ECO:0007669"/>
    <property type="project" value="UniProtKB-SubCell"/>
</dbReference>
<dbReference type="GO" id="GO:0004879">
    <property type="term" value="F:nuclear receptor activity"/>
    <property type="evidence" value="ECO:0000318"/>
    <property type="project" value="GO_Central"/>
</dbReference>
<dbReference type="GO" id="GO:0000978">
    <property type="term" value="F:RNA polymerase II cis-regulatory region sequence-specific DNA binding"/>
    <property type="evidence" value="ECO:0000318"/>
    <property type="project" value="GO_Central"/>
</dbReference>
<dbReference type="GO" id="GO:0008270">
    <property type="term" value="F:zinc ion binding"/>
    <property type="evidence" value="ECO:0007669"/>
    <property type="project" value="UniProtKB-KW"/>
</dbReference>
<dbReference type="GO" id="GO:0030154">
    <property type="term" value="P:cell differentiation"/>
    <property type="evidence" value="ECO:0000318"/>
    <property type="project" value="GO_Central"/>
</dbReference>
<dbReference type="GO" id="GO:0000122">
    <property type="term" value="P:negative regulation of transcription by RNA polymerase II"/>
    <property type="evidence" value="ECO:0000318"/>
    <property type="project" value="GO_Central"/>
</dbReference>
<dbReference type="CDD" id="cd07163">
    <property type="entry name" value="NR_DBD_TLX"/>
    <property type="match status" value="1"/>
</dbReference>
<dbReference type="CDD" id="cd06950">
    <property type="entry name" value="NR_LBD_Tlx_PNR_like"/>
    <property type="match status" value="1"/>
</dbReference>
<dbReference type="FunFam" id="3.30.50.10:FF:000019">
    <property type="entry name" value="Nuclear receptor subfamily 2 group E member"/>
    <property type="match status" value="1"/>
</dbReference>
<dbReference type="FunFam" id="1.10.565.10:FF:000019">
    <property type="entry name" value="Nuclear receptor subfamily 2 group E member 1"/>
    <property type="match status" value="1"/>
</dbReference>
<dbReference type="Gene3D" id="3.30.50.10">
    <property type="entry name" value="Erythroid Transcription Factor GATA-1, subunit A"/>
    <property type="match status" value="1"/>
</dbReference>
<dbReference type="Gene3D" id="1.10.565.10">
    <property type="entry name" value="Retinoid X Receptor"/>
    <property type="match status" value="1"/>
</dbReference>
<dbReference type="InterPro" id="IPR035500">
    <property type="entry name" value="NHR-like_dom_sf"/>
</dbReference>
<dbReference type="InterPro" id="IPR000536">
    <property type="entry name" value="Nucl_hrmn_rcpt_lig-bd"/>
</dbReference>
<dbReference type="InterPro" id="IPR050274">
    <property type="entry name" value="Nuclear_hormone_rcpt_NR2"/>
</dbReference>
<dbReference type="InterPro" id="IPR001723">
    <property type="entry name" value="Nuclear_hrmn_rcpt"/>
</dbReference>
<dbReference type="InterPro" id="IPR001628">
    <property type="entry name" value="Znf_hrmn_rcpt"/>
</dbReference>
<dbReference type="InterPro" id="IPR013088">
    <property type="entry name" value="Znf_NHR/GATA"/>
</dbReference>
<dbReference type="PANTHER" id="PTHR24083">
    <property type="entry name" value="NUCLEAR HORMONE RECEPTOR"/>
    <property type="match status" value="1"/>
</dbReference>
<dbReference type="Pfam" id="PF00104">
    <property type="entry name" value="Hormone_recep"/>
    <property type="match status" value="1"/>
</dbReference>
<dbReference type="Pfam" id="PF00105">
    <property type="entry name" value="zf-C4"/>
    <property type="match status" value="1"/>
</dbReference>
<dbReference type="PRINTS" id="PR00398">
    <property type="entry name" value="STRDHORMONER"/>
</dbReference>
<dbReference type="PRINTS" id="PR00047">
    <property type="entry name" value="STROIDFINGER"/>
</dbReference>
<dbReference type="SMART" id="SM00430">
    <property type="entry name" value="HOLI"/>
    <property type="match status" value="1"/>
</dbReference>
<dbReference type="SMART" id="SM00399">
    <property type="entry name" value="ZnF_C4"/>
    <property type="match status" value="1"/>
</dbReference>
<dbReference type="SUPFAM" id="SSF57716">
    <property type="entry name" value="Glucocorticoid receptor-like (DNA-binding domain)"/>
    <property type="match status" value="1"/>
</dbReference>
<dbReference type="SUPFAM" id="SSF48508">
    <property type="entry name" value="Nuclear receptor ligand-binding domain"/>
    <property type="match status" value="1"/>
</dbReference>
<dbReference type="PROSITE" id="PS51843">
    <property type="entry name" value="NR_LBD"/>
    <property type="match status" value="1"/>
</dbReference>
<dbReference type="PROSITE" id="PS00031">
    <property type="entry name" value="NUCLEAR_REC_DBD_1"/>
    <property type="match status" value="1"/>
</dbReference>
<dbReference type="PROSITE" id="PS51030">
    <property type="entry name" value="NUCLEAR_REC_DBD_2"/>
    <property type="match status" value="1"/>
</dbReference>
<accession>P70052</accession>
<keyword id="KW-0217">Developmental protein</keyword>
<keyword id="KW-0238">DNA-binding</keyword>
<keyword id="KW-0479">Metal-binding</keyword>
<keyword id="KW-0539">Nucleus</keyword>
<keyword id="KW-0675">Receptor</keyword>
<keyword id="KW-1185">Reference proteome</keyword>
<keyword id="KW-0804">Transcription</keyword>
<keyword id="KW-0805">Transcription regulation</keyword>
<keyword id="KW-0862">Zinc</keyword>
<keyword id="KW-0863">Zinc-finger</keyword>
<evidence type="ECO:0000250" key="1"/>
<evidence type="ECO:0000255" key="2">
    <source>
        <dbReference type="PROSITE-ProRule" id="PRU00407"/>
    </source>
</evidence>
<evidence type="ECO:0000255" key="3">
    <source>
        <dbReference type="PROSITE-ProRule" id="PRU01189"/>
    </source>
</evidence>
<evidence type="ECO:0000305" key="4"/>
<name>NR2E1_XENLA</name>
<reference key="1">
    <citation type="journal article" date="1998" name="Development">
        <title>The Xenopus homologue of the Drosophila gene tailless has a function in early eye development.</title>
        <authorList>
            <person name="Hollemann T."/>
            <person name="Bellefroid E."/>
            <person name="Pieler T."/>
        </authorList>
    </citation>
    <scope>NUCLEOTIDE SEQUENCE [MRNA]</scope>
</reference>
<gene>
    <name type="primary">nr2e1</name>
    <name type="synonym">tll</name>
    <name type="synonym">tlx</name>
</gene>
<proteinExistence type="evidence at transcript level"/>
<sequence>MSNPTGSTSRILDIPCKVCGDRSSGKHYGVYACDGCSGFFKRSIRRNRSYVCKSGNQGGCPVDKTHRNQCRACRLKKCLEVNMNKDAVQHERGPRTSTIRKQVALYFRGHKEVNGSTQHFSSTALPTPTFFTTVRQLEAHNLELAAISTVPERQTLVGLAQPTPKYPHEVNGAPLYLYEFATESVCESAARLLFMSIKWAKSVPAFSTLSLQDQLMLLEDAWRELFVLGIAQWAIPVDASTLLAVSGMNNENTESPKLNKIISEIQALQDVVSRFRQLRLDATEFACLKCIVTFKAGVSTHSGSELRNFRNAAAISALQDEAQLTLNSYIHTRYPTQPCRFGKLLLLLPALRSINPSTIEEVFFKKTIGNVPITRVLSDMYKSSDI</sequence>
<comment type="function">
    <text evidence="1">Orphan receptor that binds DNA as a monomer to hormone response elements (HRE) containing an extended core motif half-site sequence 5'-AAGTCA-3' in which the 5' flanking nucleotides participate in determining receptor specificity (By similarity). Involved in the regulation of early eye development.</text>
</comment>
<comment type="subunit">
    <text evidence="1">Monomer.</text>
</comment>
<comment type="subcellular location">
    <subcellularLocation>
        <location evidence="2">Nucleus</location>
    </subcellularLocation>
</comment>
<comment type="tissue specificity">
    <text>Prominent expression in the embryonal optic stalk and the distal tip of the forming vesicle. In tadpole-stage embryos predominantly found in the ciliary margin of the optic cup.</text>
</comment>
<comment type="similarity">
    <text evidence="4">Belongs to the nuclear hormone receptor family. NR2 subfamily.</text>
</comment>